<accession>B7N2E7</accession>
<protein>
    <recommendedName>
        <fullName evidence="1">Chromosomal replication initiator protein DnaA</fullName>
    </recommendedName>
</protein>
<dbReference type="EMBL" id="CU928162">
    <property type="protein sequence ID" value="CAR10518.2"/>
    <property type="molecule type" value="Genomic_DNA"/>
</dbReference>
<dbReference type="RefSeq" id="WP_000059111.1">
    <property type="nucleotide sequence ID" value="NC_011745.1"/>
</dbReference>
<dbReference type="SMR" id="B7N2E7"/>
<dbReference type="GeneID" id="93778443"/>
<dbReference type="KEGG" id="ecq:ECED1_4393"/>
<dbReference type="HOGENOM" id="CLU_026910_0_1_6"/>
<dbReference type="Proteomes" id="UP000000748">
    <property type="component" value="Chromosome"/>
</dbReference>
<dbReference type="GO" id="GO:0005737">
    <property type="term" value="C:cytoplasm"/>
    <property type="evidence" value="ECO:0007669"/>
    <property type="project" value="UniProtKB-SubCell"/>
</dbReference>
<dbReference type="GO" id="GO:0005886">
    <property type="term" value="C:plasma membrane"/>
    <property type="evidence" value="ECO:0007669"/>
    <property type="project" value="TreeGrafter"/>
</dbReference>
<dbReference type="GO" id="GO:0005524">
    <property type="term" value="F:ATP binding"/>
    <property type="evidence" value="ECO:0007669"/>
    <property type="project" value="UniProtKB-UniRule"/>
</dbReference>
<dbReference type="GO" id="GO:0016887">
    <property type="term" value="F:ATP hydrolysis activity"/>
    <property type="evidence" value="ECO:0007669"/>
    <property type="project" value="InterPro"/>
</dbReference>
<dbReference type="GO" id="GO:0003688">
    <property type="term" value="F:DNA replication origin binding"/>
    <property type="evidence" value="ECO:0007669"/>
    <property type="project" value="UniProtKB-UniRule"/>
</dbReference>
<dbReference type="GO" id="GO:0008289">
    <property type="term" value="F:lipid binding"/>
    <property type="evidence" value="ECO:0007669"/>
    <property type="project" value="UniProtKB-KW"/>
</dbReference>
<dbReference type="GO" id="GO:0006270">
    <property type="term" value="P:DNA replication initiation"/>
    <property type="evidence" value="ECO:0007669"/>
    <property type="project" value="UniProtKB-UniRule"/>
</dbReference>
<dbReference type="GO" id="GO:0006275">
    <property type="term" value="P:regulation of DNA replication"/>
    <property type="evidence" value="ECO:0007669"/>
    <property type="project" value="UniProtKB-UniRule"/>
</dbReference>
<dbReference type="CDD" id="cd00009">
    <property type="entry name" value="AAA"/>
    <property type="match status" value="1"/>
</dbReference>
<dbReference type="CDD" id="cd06571">
    <property type="entry name" value="Bac_DnaA_C"/>
    <property type="match status" value="1"/>
</dbReference>
<dbReference type="FunFam" id="1.10.1750.10:FF:000001">
    <property type="entry name" value="Chromosomal replication initiator protein DnaA"/>
    <property type="match status" value="1"/>
</dbReference>
<dbReference type="FunFam" id="1.10.8.60:FF:000003">
    <property type="entry name" value="Chromosomal replication initiator protein DnaA"/>
    <property type="match status" value="1"/>
</dbReference>
<dbReference type="FunFam" id="3.30.300.180:FF:000001">
    <property type="entry name" value="Chromosomal replication initiator protein DnaA"/>
    <property type="match status" value="1"/>
</dbReference>
<dbReference type="FunFam" id="3.40.50.300:FF:000103">
    <property type="entry name" value="Chromosomal replication initiator protein DnaA"/>
    <property type="match status" value="1"/>
</dbReference>
<dbReference type="Gene3D" id="1.10.1750.10">
    <property type="match status" value="1"/>
</dbReference>
<dbReference type="Gene3D" id="1.10.8.60">
    <property type="match status" value="1"/>
</dbReference>
<dbReference type="Gene3D" id="3.30.300.180">
    <property type="match status" value="1"/>
</dbReference>
<dbReference type="Gene3D" id="3.40.50.300">
    <property type="entry name" value="P-loop containing nucleotide triphosphate hydrolases"/>
    <property type="match status" value="1"/>
</dbReference>
<dbReference type="HAMAP" id="MF_00377">
    <property type="entry name" value="DnaA_bact"/>
    <property type="match status" value="1"/>
</dbReference>
<dbReference type="InterPro" id="IPR003593">
    <property type="entry name" value="AAA+_ATPase"/>
</dbReference>
<dbReference type="InterPro" id="IPR001957">
    <property type="entry name" value="Chromosome_initiator_DnaA"/>
</dbReference>
<dbReference type="InterPro" id="IPR020591">
    <property type="entry name" value="Chromosome_initiator_DnaA-like"/>
</dbReference>
<dbReference type="InterPro" id="IPR018312">
    <property type="entry name" value="Chromosome_initiator_DnaA_CS"/>
</dbReference>
<dbReference type="InterPro" id="IPR013159">
    <property type="entry name" value="DnaA_C"/>
</dbReference>
<dbReference type="InterPro" id="IPR013317">
    <property type="entry name" value="DnaA_dom"/>
</dbReference>
<dbReference type="InterPro" id="IPR024633">
    <property type="entry name" value="DnaA_N_dom"/>
</dbReference>
<dbReference type="InterPro" id="IPR038454">
    <property type="entry name" value="DnaA_N_sf"/>
</dbReference>
<dbReference type="InterPro" id="IPR027417">
    <property type="entry name" value="P-loop_NTPase"/>
</dbReference>
<dbReference type="InterPro" id="IPR010921">
    <property type="entry name" value="Trp_repressor/repl_initiator"/>
</dbReference>
<dbReference type="NCBIfam" id="TIGR00362">
    <property type="entry name" value="DnaA"/>
    <property type="match status" value="1"/>
</dbReference>
<dbReference type="PANTHER" id="PTHR30050">
    <property type="entry name" value="CHROMOSOMAL REPLICATION INITIATOR PROTEIN DNAA"/>
    <property type="match status" value="1"/>
</dbReference>
<dbReference type="PANTHER" id="PTHR30050:SF2">
    <property type="entry name" value="CHROMOSOMAL REPLICATION INITIATOR PROTEIN DNAA"/>
    <property type="match status" value="1"/>
</dbReference>
<dbReference type="Pfam" id="PF00308">
    <property type="entry name" value="Bac_DnaA"/>
    <property type="match status" value="1"/>
</dbReference>
<dbReference type="Pfam" id="PF08299">
    <property type="entry name" value="Bac_DnaA_C"/>
    <property type="match status" value="1"/>
</dbReference>
<dbReference type="Pfam" id="PF11638">
    <property type="entry name" value="DnaA_N"/>
    <property type="match status" value="1"/>
</dbReference>
<dbReference type="PRINTS" id="PR00051">
    <property type="entry name" value="DNAA"/>
</dbReference>
<dbReference type="SMART" id="SM00382">
    <property type="entry name" value="AAA"/>
    <property type="match status" value="1"/>
</dbReference>
<dbReference type="SMART" id="SM00760">
    <property type="entry name" value="Bac_DnaA_C"/>
    <property type="match status" value="1"/>
</dbReference>
<dbReference type="SUPFAM" id="SSF52540">
    <property type="entry name" value="P-loop containing nucleoside triphosphate hydrolases"/>
    <property type="match status" value="1"/>
</dbReference>
<dbReference type="SUPFAM" id="SSF48295">
    <property type="entry name" value="TrpR-like"/>
    <property type="match status" value="1"/>
</dbReference>
<dbReference type="PROSITE" id="PS01008">
    <property type="entry name" value="DNAA"/>
    <property type="match status" value="1"/>
</dbReference>
<proteinExistence type="inferred from homology"/>
<name>DNAA_ECO81</name>
<gene>
    <name evidence="1" type="primary">dnaA</name>
    <name type="ordered locus">ECED1_4393</name>
</gene>
<comment type="function">
    <text evidence="1">Plays an essential role in the initiation and regulation of chromosomal replication. ATP-DnaA binds to the origin of replication (oriC) to initiate formation of the DNA replication initiation complex once per cell cycle. Binds the DnaA box (a 9 base pair repeat at the origin) and separates the double-stranded (ds)DNA. Forms a right-handed helical filament on oriC DNA; dsDNA binds to the exterior of the filament while single-stranded (ss)DNA is stabiized in the filament's interior. The ATP-DnaA-oriC complex binds and stabilizes one strand of the AT-rich DNA unwinding element (DUE), permitting loading of DNA polymerase. After initiation quickly degrades to an ADP-DnaA complex that is not apt for DNA replication. Binds acidic phospholipids.</text>
</comment>
<comment type="subunit">
    <text evidence="1">Oligomerizes as a right-handed, spiral filament on DNA at oriC.</text>
</comment>
<comment type="subcellular location">
    <subcellularLocation>
        <location evidence="1">Cytoplasm</location>
    </subcellularLocation>
</comment>
<comment type="domain">
    <text evidence="1">Domain I is involved in oligomerization and binding regulators, domain II is flexibile and of varying length in different bacteria, domain III forms the AAA+ region, while domain IV binds dsDNA.</text>
</comment>
<comment type="similarity">
    <text evidence="1">Belongs to the DnaA family.</text>
</comment>
<evidence type="ECO:0000255" key="1">
    <source>
        <dbReference type="HAMAP-Rule" id="MF_00377"/>
    </source>
</evidence>
<evidence type="ECO:0000256" key="2">
    <source>
        <dbReference type="SAM" id="MobiDB-lite"/>
    </source>
</evidence>
<sequence length="467" mass="52551">MSLSLWQQCLARLQDELPATEFSMWIRPLQAELSDNTLALYAPNRFVLDWVRDKYLNNINGLLTSFCGADAPQLRFEVGTKPVTQTPQAAVTSNVAAPAQVAQTQPQRAAPSTRSGWDNVPAPAEPTYRSNVNVKHTFDNFVEGKSNQLARAAARQVADNPGGAYNPLFLYGGTGLGKTHLLHAVGNGIMARKPNAKVVYMHSERFVQDMVKALQNNAIEEFKRYYRSVDALLIDDIQFFANKERSQEEFFHTFNALLEGNQQIILTSDRYPKEINGVEDRLKSRFGWGLTVAIEPPELETRVAILMKKADENDIRLPGEVAFFIAKRLRSNVRELEGALNRVIANANFTGRAITIDFVREALRDLLALQEKLVTIDNIQKTVAEYYKIKVADLLSKRRSRSVARPRQMAMALAKELTNHSLPEIGDAFGGRDHTTVLHACRKIEQLREESHDIKEDFSNLIRTLSS</sequence>
<organism>
    <name type="scientific">Escherichia coli O81 (strain ED1a)</name>
    <dbReference type="NCBI Taxonomy" id="585397"/>
    <lineage>
        <taxon>Bacteria</taxon>
        <taxon>Pseudomonadati</taxon>
        <taxon>Pseudomonadota</taxon>
        <taxon>Gammaproteobacteria</taxon>
        <taxon>Enterobacterales</taxon>
        <taxon>Enterobacteriaceae</taxon>
        <taxon>Escherichia</taxon>
    </lineage>
</organism>
<keyword id="KW-0067">ATP-binding</keyword>
<keyword id="KW-0963">Cytoplasm</keyword>
<keyword id="KW-0235">DNA replication</keyword>
<keyword id="KW-0238">DNA-binding</keyword>
<keyword id="KW-0446">Lipid-binding</keyword>
<keyword id="KW-0547">Nucleotide-binding</keyword>
<reference key="1">
    <citation type="journal article" date="2009" name="PLoS Genet.">
        <title>Organised genome dynamics in the Escherichia coli species results in highly diverse adaptive paths.</title>
        <authorList>
            <person name="Touchon M."/>
            <person name="Hoede C."/>
            <person name="Tenaillon O."/>
            <person name="Barbe V."/>
            <person name="Baeriswyl S."/>
            <person name="Bidet P."/>
            <person name="Bingen E."/>
            <person name="Bonacorsi S."/>
            <person name="Bouchier C."/>
            <person name="Bouvet O."/>
            <person name="Calteau A."/>
            <person name="Chiapello H."/>
            <person name="Clermont O."/>
            <person name="Cruveiller S."/>
            <person name="Danchin A."/>
            <person name="Diard M."/>
            <person name="Dossat C."/>
            <person name="Karoui M.E."/>
            <person name="Frapy E."/>
            <person name="Garry L."/>
            <person name="Ghigo J.M."/>
            <person name="Gilles A.M."/>
            <person name="Johnson J."/>
            <person name="Le Bouguenec C."/>
            <person name="Lescat M."/>
            <person name="Mangenot S."/>
            <person name="Martinez-Jehanne V."/>
            <person name="Matic I."/>
            <person name="Nassif X."/>
            <person name="Oztas S."/>
            <person name="Petit M.A."/>
            <person name="Pichon C."/>
            <person name="Rouy Z."/>
            <person name="Ruf C.S."/>
            <person name="Schneider D."/>
            <person name="Tourret J."/>
            <person name="Vacherie B."/>
            <person name="Vallenet D."/>
            <person name="Medigue C."/>
            <person name="Rocha E.P.C."/>
            <person name="Denamur E."/>
        </authorList>
    </citation>
    <scope>NUCLEOTIDE SEQUENCE [LARGE SCALE GENOMIC DNA]</scope>
    <source>
        <strain>ED1a</strain>
    </source>
</reference>
<feature type="chain" id="PRO_1000189797" description="Chromosomal replication initiator protein DnaA">
    <location>
        <begin position="1"/>
        <end position="467"/>
    </location>
</feature>
<feature type="region of interest" description="Domain I, interacts with DnaA modulators" evidence="1">
    <location>
        <begin position="1"/>
        <end position="90"/>
    </location>
</feature>
<feature type="region of interest" description="Domain II" evidence="1">
    <location>
        <begin position="91"/>
        <end position="130"/>
    </location>
</feature>
<feature type="region of interest" description="Disordered" evidence="2">
    <location>
        <begin position="98"/>
        <end position="119"/>
    </location>
</feature>
<feature type="region of interest" description="Domain III, AAA+ region" evidence="1">
    <location>
        <begin position="131"/>
        <end position="347"/>
    </location>
</feature>
<feature type="region of interest" description="Domain IV, binds dsDNA" evidence="1">
    <location>
        <begin position="348"/>
        <end position="467"/>
    </location>
</feature>
<feature type="compositionally biased region" description="Low complexity" evidence="2">
    <location>
        <begin position="98"/>
        <end position="111"/>
    </location>
</feature>
<feature type="binding site" evidence="1">
    <location>
        <position position="175"/>
    </location>
    <ligand>
        <name>ATP</name>
        <dbReference type="ChEBI" id="CHEBI:30616"/>
    </ligand>
</feature>
<feature type="binding site" evidence="1">
    <location>
        <position position="177"/>
    </location>
    <ligand>
        <name>ATP</name>
        <dbReference type="ChEBI" id="CHEBI:30616"/>
    </ligand>
</feature>
<feature type="binding site" evidence="1">
    <location>
        <position position="178"/>
    </location>
    <ligand>
        <name>ATP</name>
        <dbReference type="ChEBI" id="CHEBI:30616"/>
    </ligand>
</feature>
<feature type="binding site" evidence="1">
    <location>
        <position position="179"/>
    </location>
    <ligand>
        <name>ATP</name>
        <dbReference type="ChEBI" id="CHEBI:30616"/>
    </ligand>
</feature>